<name>SEPT9_HUMAN</name>
<evidence type="ECO:0000250" key="1"/>
<evidence type="ECO:0000250" key="2">
    <source>
        <dbReference type="UniProtKB" id="Q80UG5"/>
    </source>
</evidence>
<evidence type="ECO:0000255" key="3">
    <source>
        <dbReference type="PROSITE-ProRule" id="PRU01056"/>
    </source>
</evidence>
<evidence type="ECO:0000256" key="4">
    <source>
        <dbReference type="SAM" id="MobiDB-lite"/>
    </source>
</evidence>
<evidence type="ECO:0000269" key="5">
    <source>
    </source>
</evidence>
<evidence type="ECO:0000269" key="6">
    <source>
    </source>
</evidence>
<evidence type="ECO:0000269" key="7">
    <source>
    </source>
</evidence>
<evidence type="ECO:0000269" key="8">
    <source>
    </source>
</evidence>
<evidence type="ECO:0000269" key="9">
    <source>
    </source>
</evidence>
<evidence type="ECO:0000269" key="10">
    <source>
    </source>
</evidence>
<evidence type="ECO:0000269" key="11">
    <source>
    </source>
</evidence>
<evidence type="ECO:0000269" key="12">
    <source>
    </source>
</evidence>
<evidence type="ECO:0000269" key="13">
    <source>
    </source>
</evidence>
<evidence type="ECO:0000269" key="14">
    <source>
    </source>
</evidence>
<evidence type="ECO:0000269" key="15">
    <source>
    </source>
</evidence>
<evidence type="ECO:0000269" key="16">
    <source>
    </source>
</evidence>
<evidence type="ECO:0000269" key="17">
    <source>
    </source>
</evidence>
<evidence type="ECO:0000269" key="18">
    <source>
    </source>
</evidence>
<evidence type="ECO:0000269" key="19">
    <source>
    </source>
</evidence>
<evidence type="ECO:0000269" key="20">
    <source>
    </source>
</evidence>
<evidence type="ECO:0000269" key="21">
    <source>
    </source>
</evidence>
<evidence type="ECO:0000269" key="22">
    <source>
    </source>
</evidence>
<evidence type="ECO:0000269" key="23">
    <source ref="4"/>
</evidence>
<evidence type="ECO:0000269" key="24">
    <source ref="6"/>
</evidence>
<evidence type="ECO:0000269" key="25">
    <source ref="7"/>
</evidence>
<evidence type="ECO:0000303" key="26">
    <source>
    </source>
</evidence>
<evidence type="ECO:0000303" key="27">
    <source>
    </source>
</evidence>
<evidence type="ECO:0000303" key="28">
    <source>
    </source>
</evidence>
<evidence type="ECO:0000303" key="29">
    <source>
    </source>
</evidence>
<evidence type="ECO:0000303" key="30">
    <source>
    </source>
</evidence>
<evidence type="ECO:0000303" key="31">
    <source ref="4"/>
</evidence>
<evidence type="ECO:0000303" key="32">
    <source ref="6"/>
</evidence>
<evidence type="ECO:0000305" key="33"/>
<evidence type="ECO:0000312" key="34">
    <source>
        <dbReference type="HGNC" id="HGNC:7323"/>
    </source>
</evidence>
<evidence type="ECO:0007744" key="35">
    <source>
    </source>
</evidence>
<evidence type="ECO:0007744" key="36">
    <source>
    </source>
</evidence>
<evidence type="ECO:0007744" key="37">
    <source>
    </source>
</evidence>
<evidence type="ECO:0007744" key="38">
    <source>
    </source>
</evidence>
<evidence type="ECO:0007744" key="39">
    <source>
    </source>
</evidence>
<evidence type="ECO:0007744" key="40">
    <source>
    </source>
</evidence>
<evidence type="ECO:0007744" key="41">
    <source>
    </source>
</evidence>
<evidence type="ECO:0007744" key="42">
    <source>
    </source>
</evidence>
<evidence type="ECO:0007744" key="43">
    <source>
    </source>
</evidence>
<evidence type="ECO:0007829" key="44">
    <source>
        <dbReference type="PDB" id="4YQF"/>
    </source>
</evidence>
<evidence type="ECO:0007829" key="45">
    <source>
        <dbReference type="PDB" id="5CYO"/>
    </source>
</evidence>
<evidence type="ECO:0007829" key="46">
    <source>
        <dbReference type="PDB" id="5CYP"/>
    </source>
</evidence>
<organism>
    <name type="scientific">Homo sapiens</name>
    <name type="common">Human</name>
    <dbReference type="NCBI Taxonomy" id="9606"/>
    <lineage>
        <taxon>Eukaryota</taxon>
        <taxon>Metazoa</taxon>
        <taxon>Chordata</taxon>
        <taxon>Craniata</taxon>
        <taxon>Vertebrata</taxon>
        <taxon>Euteleostomi</taxon>
        <taxon>Mammalia</taxon>
        <taxon>Eutheria</taxon>
        <taxon>Euarchontoglires</taxon>
        <taxon>Primates</taxon>
        <taxon>Haplorrhini</taxon>
        <taxon>Catarrhini</taxon>
        <taxon>Hominidae</taxon>
        <taxon>Homo</taxon>
    </lineage>
</organism>
<dbReference type="EMBL" id="AF123052">
    <property type="protein sequence ID" value="AAD39749.1"/>
    <property type="molecule type" value="mRNA"/>
</dbReference>
<dbReference type="EMBL" id="AJ312319">
    <property type="protein sequence ID" value="CAC42221.1"/>
    <property type="molecule type" value="mRNA"/>
</dbReference>
<dbReference type="EMBL" id="AJ312320">
    <property type="protein sequence ID" value="CAC42222.1"/>
    <property type="molecule type" value="mRNA"/>
</dbReference>
<dbReference type="EMBL" id="AJ312321">
    <property type="protein sequence ID" value="CAC42223.1"/>
    <property type="molecule type" value="mRNA"/>
</dbReference>
<dbReference type="EMBL" id="AJ312322">
    <property type="protein sequence ID" value="CAC42224.1"/>
    <property type="molecule type" value="mRNA"/>
</dbReference>
<dbReference type="EMBL" id="AF189712">
    <property type="protein sequence ID" value="AAF23373.1"/>
    <property type="molecule type" value="mRNA"/>
</dbReference>
<dbReference type="EMBL" id="AF189713">
    <property type="protein sequence ID" value="AAF23374.1"/>
    <property type="molecule type" value="mRNA"/>
</dbReference>
<dbReference type="EMBL" id="AF142408">
    <property type="protein sequence ID" value="AAG27919.1"/>
    <property type="molecule type" value="mRNA"/>
</dbReference>
<dbReference type="EMBL" id="AK022493">
    <property type="protein sequence ID" value="BAB14057.1"/>
    <property type="status" value="ALT_SEQ"/>
    <property type="molecule type" value="mRNA"/>
</dbReference>
<dbReference type="EMBL" id="AK290368">
    <property type="protein sequence ID" value="BAF83057.1"/>
    <property type="molecule type" value="mRNA"/>
</dbReference>
<dbReference type="EMBL" id="AK056495">
    <property type="protein sequence ID" value="BAG51732.1"/>
    <property type="molecule type" value="mRNA"/>
</dbReference>
<dbReference type="EMBL" id="AK300270">
    <property type="protein sequence ID" value="BAG62031.1"/>
    <property type="molecule type" value="mRNA"/>
</dbReference>
<dbReference type="EMBL" id="AK303449">
    <property type="protein sequence ID" value="BAG64494.1"/>
    <property type="molecule type" value="mRNA"/>
</dbReference>
<dbReference type="EMBL" id="AK304143">
    <property type="protein sequence ID" value="BAG65036.1"/>
    <property type="molecule type" value="mRNA"/>
</dbReference>
<dbReference type="EMBL" id="AK299828">
    <property type="protein sequence ID" value="BAH13140.1"/>
    <property type="molecule type" value="mRNA"/>
</dbReference>
<dbReference type="EMBL" id="AK316473">
    <property type="protein sequence ID" value="BAH14844.1"/>
    <property type="molecule type" value="mRNA"/>
</dbReference>
<dbReference type="EMBL" id="BT007215">
    <property type="protein sequence ID" value="AAP35879.1"/>
    <property type="molecule type" value="mRNA"/>
</dbReference>
<dbReference type="EMBL" id="CH471099">
    <property type="protein sequence ID" value="EAW89462.1"/>
    <property type="molecule type" value="Genomic_DNA"/>
</dbReference>
<dbReference type="EMBL" id="CH471099">
    <property type="protein sequence ID" value="EAW89463.1"/>
    <property type="molecule type" value="Genomic_DNA"/>
</dbReference>
<dbReference type="EMBL" id="CH471099">
    <property type="protein sequence ID" value="EAW89468.1"/>
    <property type="molecule type" value="Genomic_DNA"/>
</dbReference>
<dbReference type="EMBL" id="BC021192">
    <property type="protein sequence ID" value="AAH21192.1"/>
    <property type="molecule type" value="mRNA"/>
</dbReference>
<dbReference type="EMBL" id="BC054004">
    <property type="protein sequence ID" value="AAH54004.1"/>
    <property type="molecule type" value="mRNA"/>
</dbReference>
<dbReference type="EMBL" id="AB023208">
    <property type="protein sequence ID" value="BAA76835.2"/>
    <property type="molecule type" value="mRNA"/>
</dbReference>
<dbReference type="EMBL" id="AL080131">
    <property type="protein sequence ID" value="CAB45728.1"/>
    <property type="molecule type" value="mRNA"/>
</dbReference>
<dbReference type="CCDS" id="CCDS45790.1">
    <molecule id="Q9UHD8-1"/>
</dbReference>
<dbReference type="CCDS" id="CCDS45791.1">
    <molecule id="Q9UHD8-2"/>
</dbReference>
<dbReference type="CCDS" id="CCDS45792.1">
    <molecule id="Q9UHD8-5"/>
</dbReference>
<dbReference type="CCDS" id="CCDS45793.1">
    <molecule id="Q9UHD8-3"/>
</dbReference>
<dbReference type="CCDS" id="CCDS45795.1">
    <molecule id="Q9UHD8-4"/>
</dbReference>
<dbReference type="CCDS" id="CCDS74166.1">
    <molecule id="Q9UHD8-9"/>
</dbReference>
<dbReference type="CCDS" id="CCDS77122.1">
    <molecule id="Q9UHD8-7"/>
</dbReference>
<dbReference type="PIR" id="T12519">
    <property type="entry name" value="T12519"/>
</dbReference>
<dbReference type="RefSeq" id="NP_001106963.1">
    <molecule id="Q9UHD8-1"/>
    <property type="nucleotide sequence ID" value="NM_001113491.2"/>
</dbReference>
<dbReference type="RefSeq" id="NP_001106964.1">
    <molecule id="Q9UHD8-3"/>
    <property type="nucleotide sequence ID" value="NM_001113492.2"/>
</dbReference>
<dbReference type="RefSeq" id="NP_001106965.1">
    <molecule id="Q9UHD8-5"/>
    <property type="nucleotide sequence ID" value="NM_001113493.2"/>
</dbReference>
<dbReference type="RefSeq" id="NP_001106966.1">
    <molecule id="Q9UHD8-3"/>
    <property type="nucleotide sequence ID" value="NM_001113494.1"/>
</dbReference>
<dbReference type="RefSeq" id="NP_001106967.2">
    <molecule id="Q9UHD8-4"/>
    <property type="nucleotide sequence ID" value="NM_001113495.2"/>
</dbReference>
<dbReference type="RefSeq" id="NP_001106968.1">
    <molecule id="Q9UHD8-4"/>
    <property type="nucleotide sequence ID" value="NM_001113496.2"/>
</dbReference>
<dbReference type="RefSeq" id="NP_001280624.1">
    <molecule id="Q9UHD8-7"/>
    <property type="nucleotide sequence ID" value="NM_001293695.2"/>
</dbReference>
<dbReference type="RefSeq" id="NP_001280625.1">
    <molecule id="Q9UHD8-9"/>
    <property type="nucleotide sequence ID" value="NM_001293696.2"/>
</dbReference>
<dbReference type="RefSeq" id="NP_001280626.1">
    <molecule id="Q9UHD8-4"/>
    <property type="nucleotide sequence ID" value="NM_001293697.2"/>
</dbReference>
<dbReference type="RefSeq" id="NP_001280627.1">
    <molecule id="Q9UHD8-4"/>
    <property type="nucleotide sequence ID" value="NM_001293698.2"/>
</dbReference>
<dbReference type="RefSeq" id="NP_006631.2">
    <molecule id="Q9UHD8-2"/>
    <property type="nucleotide sequence ID" value="NM_006640.5"/>
</dbReference>
<dbReference type="RefSeq" id="XP_005257019.1">
    <property type="nucleotide sequence ID" value="XM_005256962.1"/>
</dbReference>
<dbReference type="RefSeq" id="XP_006721706.1">
    <property type="nucleotide sequence ID" value="XM_006721643.2"/>
</dbReference>
<dbReference type="RefSeq" id="XP_006721707.1">
    <property type="nucleotide sequence ID" value="XM_006721644.1"/>
</dbReference>
<dbReference type="RefSeq" id="XP_011522509.1">
    <property type="nucleotide sequence ID" value="XM_011524207.1"/>
</dbReference>
<dbReference type="RefSeq" id="XP_011522510.1">
    <property type="nucleotide sequence ID" value="XM_011524208.2"/>
</dbReference>
<dbReference type="RefSeq" id="XP_016879520.1">
    <property type="nucleotide sequence ID" value="XM_017024031.1"/>
</dbReference>
<dbReference type="RefSeq" id="XP_016879521.1">
    <property type="nucleotide sequence ID" value="XM_017024032.1"/>
</dbReference>
<dbReference type="PDB" id="4YQF">
    <property type="method" value="X-ray"/>
    <property type="resolution" value="2.73 A"/>
    <property type="chains" value="A/B=296-565"/>
</dbReference>
<dbReference type="PDB" id="5CYO">
    <property type="method" value="X-ray"/>
    <property type="resolution" value="2.04 A"/>
    <property type="chains" value="A/B=295-568"/>
</dbReference>
<dbReference type="PDB" id="5CYP">
    <property type="method" value="X-ray"/>
    <property type="resolution" value="2.89 A"/>
    <property type="chains" value="A/B/C/D=293-566"/>
</dbReference>
<dbReference type="PDBsum" id="4YQF"/>
<dbReference type="PDBsum" id="5CYO"/>
<dbReference type="PDBsum" id="5CYP"/>
<dbReference type="SMR" id="Q9UHD8"/>
<dbReference type="BioGRID" id="116015">
    <property type="interactions" value="271"/>
</dbReference>
<dbReference type="ComplexPortal" id="CPX-25758">
    <property type="entry name" value="Septin complex, octamer variant, SEPT2-SEPT6-SEPT-7-SEPT9"/>
</dbReference>
<dbReference type="DIP" id="DIP-36697N"/>
<dbReference type="FunCoup" id="Q9UHD8">
    <property type="interactions" value="635"/>
</dbReference>
<dbReference type="IntAct" id="Q9UHD8">
    <property type="interactions" value="77"/>
</dbReference>
<dbReference type="MINT" id="Q9UHD8"/>
<dbReference type="STRING" id="9606.ENSP00000391249"/>
<dbReference type="ChEMBL" id="CHEMBL4105891"/>
<dbReference type="DrugCentral" id="Q9UHD8"/>
<dbReference type="CarbonylDB" id="Q9UHD8"/>
<dbReference type="GlyCosmos" id="Q9UHD8">
    <property type="glycosylation" value="1 site, 1 glycan"/>
</dbReference>
<dbReference type="GlyGen" id="Q9UHD8">
    <property type="glycosylation" value="7 sites, 1 O-linked glycan (5 sites)"/>
</dbReference>
<dbReference type="iPTMnet" id="Q9UHD8"/>
<dbReference type="MetOSite" id="Q9UHD8"/>
<dbReference type="PhosphoSitePlus" id="Q9UHD8"/>
<dbReference type="SwissPalm" id="Q9UHD8"/>
<dbReference type="BioMuta" id="SEPT9"/>
<dbReference type="DMDM" id="93141311"/>
<dbReference type="jPOST" id="Q9UHD8"/>
<dbReference type="MassIVE" id="Q9UHD8"/>
<dbReference type="PaxDb" id="9606-ENSP00000391249"/>
<dbReference type="PeptideAtlas" id="Q9UHD8"/>
<dbReference type="ProteomicsDB" id="84325">
    <molecule id="Q9UHD8-1"/>
</dbReference>
<dbReference type="ProteomicsDB" id="84326">
    <molecule id="Q9UHD8-2"/>
</dbReference>
<dbReference type="ProteomicsDB" id="84327">
    <molecule id="Q9UHD8-3"/>
</dbReference>
<dbReference type="ProteomicsDB" id="84328">
    <molecule id="Q9UHD8-4"/>
</dbReference>
<dbReference type="ProteomicsDB" id="84329">
    <molecule id="Q9UHD8-5"/>
</dbReference>
<dbReference type="ProteomicsDB" id="84330">
    <molecule id="Q9UHD8-7"/>
</dbReference>
<dbReference type="ProteomicsDB" id="84331">
    <molecule id="Q9UHD8-8"/>
</dbReference>
<dbReference type="ProteomicsDB" id="84332">
    <molecule id="Q9UHD8-9"/>
</dbReference>
<dbReference type="Pumba" id="Q9UHD8"/>
<dbReference type="Antibodypedia" id="32488">
    <property type="antibodies" value="240 antibodies from 32 providers"/>
</dbReference>
<dbReference type="DNASU" id="10801"/>
<dbReference type="Ensembl" id="ENST00000329047.13">
    <molecule id="Q9UHD8-2"/>
    <property type="protein sequence ID" value="ENSP00000329161.8"/>
    <property type="gene ID" value="ENSG00000184640.20"/>
</dbReference>
<dbReference type="Ensembl" id="ENST00000423034.6">
    <molecule id="Q9UHD8-5"/>
    <property type="protein sequence ID" value="ENSP00000405877.1"/>
    <property type="gene ID" value="ENSG00000184640.20"/>
</dbReference>
<dbReference type="Ensembl" id="ENST00000427177.6">
    <molecule id="Q9UHD8-1"/>
    <property type="protein sequence ID" value="ENSP00000391249.1"/>
    <property type="gene ID" value="ENSG00000184640.20"/>
</dbReference>
<dbReference type="Ensembl" id="ENST00000427180.5">
    <molecule id="Q9UHD8-4"/>
    <property type="protein sequence ID" value="ENSP00000504196.1"/>
    <property type="gene ID" value="ENSG00000184640.20"/>
</dbReference>
<dbReference type="Ensembl" id="ENST00000427674.6">
    <molecule id="Q9UHD8-3"/>
    <property type="protein sequence ID" value="ENSP00000403194.1"/>
    <property type="gene ID" value="ENSG00000184640.20"/>
</dbReference>
<dbReference type="Ensembl" id="ENST00000431235.6">
    <molecule id="Q9UHD8-3"/>
    <property type="protein sequence ID" value="ENSP00000406987.2"/>
    <property type="gene ID" value="ENSG00000184640.20"/>
</dbReference>
<dbReference type="Ensembl" id="ENST00000449803.6">
    <molecule id="Q9UHD8-3"/>
    <property type="protein sequence ID" value="ENSP00000400181.2"/>
    <property type="gene ID" value="ENSG00000184640.20"/>
</dbReference>
<dbReference type="Ensembl" id="ENST00000541152.6">
    <molecule id="Q9UHD8-4"/>
    <property type="protein sequence ID" value="ENSP00000438089.2"/>
    <property type="gene ID" value="ENSG00000184640.20"/>
</dbReference>
<dbReference type="Ensembl" id="ENST00000585930.5">
    <molecule id="Q9UHD8-9"/>
    <property type="protein sequence ID" value="ENSP00000468120.1"/>
    <property type="gene ID" value="ENSG00000184640.20"/>
</dbReference>
<dbReference type="Ensembl" id="ENST00000588690.6">
    <molecule id="Q9UHD8-3"/>
    <property type="protein sequence ID" value="ENSP00000468668.1"/>
    <property type="gene ID" value="ENSG00000184640.20"/>
</dbReference>
<dbReference type="Ensembl" id="ENST00000591088.5">
    <molecule id="Q9UHD8-4"/>
    <property type="protein sequence ID" value="ENSP00000466247.1"/>
    <property type="gene ID" value="ENSG00000184640.20"/>
</dbReference>
<dbReference type="Ensembl" id="ENST00000591198.5">
    <molecule id="Q9UHD8-7"/>
    <property type="protein sequence ID" value="ENSP00000468406.1"/>
    <property type="gene ID" value="ENSG00000184640.20"/>
</dbReference>
<dbReference type="Ensembl" id="ENST00000592951.5">
    <molecule id="Q9UHD8-4"/>
    <property type="protein sequence ID" value="ENSP00000466648.1"/>
    <property type="gene ID" value="ENSG00000184640.20"/>
</dbReference>
<dbReference type="GeneID" id="10801"/>
<dbReference type="KEGG" id="hsa:10801"/>
<dbReference type="MANE-Select" id="ENST00000427177.6">
    <property type="protein sequence ID" value="ENSP00000391249.1"/>
    <property type="RefSeq nucleotide sequence ID" value="NM_001113491.2"/>
    <property type="RefSeq protein sequence ID" value="NP_001106963.1"/>
</dbReference>
<dbReference type="UCSC" id="uc002jts.5">
    <molecule id="Q9UHD8-1"/>
    <property type="organism name" value="human"/>
</dbReference>
<dbReference type="AGR" id="HGNC:7323"/>
<dbReference type="CTD" id="10801"/>
<dbReference type="DisGeNET" id="10801"/>
<dbReference type="GeneCards" id="SEPTIN9"/>
<dbReference type="HGNC" id="HGNC:7323">
    <property type="gene designation" value="SEPTIN9"/>
</dbReference>
<dbReference type="HPA" id="ENSG00000184640">
    <property type="expression patterns" value="Low tissue specificity"/>
</dbReference>
<dbReference type="MalaCards" id="SEPTIN9"/>
<dbReference type="MIM" id="162100">
    <property type="type" value="phenotype"/>
</dbReference>
<dbReference type="MIM" id="604061">
    <property type="type" value="gene"/>
</dbReference>
<dbReference type="neXtProt" id="NX_Q9UHD8"/>
<dbReference type="OpenTargets" id="ENSG00000184640"/>
<dbReference type="Orphanet" id="2901">
    <property type="disease" value="Neuralgic amyotrophy"/>
</dbReference>
<dbReference type="PharmGKB" id="PA31132"/>
<dbReference type="VEuPathDB" id="HostDB:ENSG00000184640"/>
<dbReference type="eggNOG" id="KOG1547">
    <property type="taxonomic scope" value="Eukaryota"/>
</dbReference>
<dbReference type="GeneTree" id="ENSGT00940000157195"/>
<dbReference type="HOGENOM" id="CLU_017718_5_0_1"/>
<dbReference type="InParanoid" id="Q9UHD8"/>
<dbReference type="OMA" id="HINNENX"/>
<dbReference type="OrthoDB" id="416553at2759"/>
<dbReference type="PAN-GO" id="Q9UHD8">
    <property type="GO annotations" value="8 GO annotations based on evolutionary models"/>
</dbReference>
<dbReference type="PhylomeDB" id="Q9UHD8"/>
<dbReference type="TreeFam" id="TF101078"/>
<dbReference type="PathwayCommons" id="Q9UHD8"/>
<dbReference type="SignaLink" id="Q9UHD8"/>
<dbReference type="SIGNOR" id="Q9UHD8"/>
<dbReference type="BioGRID-ORCS" id="10801">
    <property type="hits" value="15 hits in 1081 CRISPR screens"/>
</dbReference>
<dbReference type="CD-CODE" id="8C2F96ED">
    <property type="entry name" value="Centrosome"/>
</dbReference>
<dbReference type="CD-CODE" id="FB4E32DD">
    <property type="entry name" value="Presynaptic clusters and postsynaptic densities"/>
</dbReference>
<dbReference type="ChiTaRS" id="SEPT9">
    <property type="organism name" value="human"/>
</dbReference>
<dbReference type="EvolutionaryTrace" id="Q9UHD8"/>
<dbReference type="GeneWiki" id="SEPT9"/>
<dbReference type="GenomeRNAi" id="10801"/>
<dbReference type="Pharos" id="Q9UHD8">
    <property type="development level" value="Tchem"/>
</dbReference>
<dbReference type="PRO" id="PR:Q9UHD8"/>
<dbReference type="Proteomes" id="UP000005640">
    <property type="component" value="Chromosome 17"/>
</dbReference>
<dbReference type="RNAct" id="Q9UHD8">
    <property type="molecule type" value="protein"/>
</dbReference>
<dbReference type="Bgee" id="ENSG00000184640">
    <property type="expression patterns" value="Expressed in ileal mucosa and 204 other cell types or tissues"/>
</dbReference>
<dbReference type="ExpressionAtlas" id="Q9UHD8">
    <property type="expression patterns" value="baseline and differential"/>
</dbReference>
<dbReference type="GO" id="GO:0015629">
    <property type="term" value="C:actin cytoskeleton"/>
    <property type="evidence" value="ECO:0000314"/>
    <property type="project" value="HPA"/>
</dbReference>
<dbReference type="GO" id="GO:0005930">
    <property type="term" value="C:axoneme"/>
    <property type="evidence" value="ECO:0000314"/>
    <property type="project" value="GO_Central"/>
</dbReference>
<dbReference type="GO" id="GO:0032153">
    <property type="term" value="C:cell division site"/>
    <property type="evidence" value="ECO:0000318"/>
    <property type="project" value="GO_Central"/>
</dbReference>
<dbReference type="GO" id="GO:0005929">
    <property type="term" value="C:cilium"/>
    <property type="evidence" value="ECO:0000314"/>
    <property type="project" value="HPA"/>
</dbReference>
<dbReference type="GO" id="GO:0005737">
    <property type="term" value="C:cytoplasm"/>
    <property type="evidence" value="ECO:0000304"/>
    <property type="project" value="ProtInc"/>
</dbReference>
<dbReference type="GO" id="GO:0045171">
    <property type="term" value="C:intercellular bridge"/>
    <property type="evidence" value="ECO:0000314"/>
    <property type="project" value="HPA"/>
</dbReference>
<dbReference type="GO" id="GO:0005874">
    <property type="term" value="C:microtubule"/>
    <property type="evidence" value="ECO:0000314"/>
    <property type="project" value="UniProtKB"/>
</dbReference>
<dbReference type="GO" id="GO:0015630">
    <property type="term" value="C:microtubule cytoskeleton"/>
    <property type="evidence" value="ECO:0000314"/>
    <property type="project" value="HPA"/>
</dbReference>
<dbReference type="GO" id="GO:0097730">
    <property type="term" value="C:non-motile cilium"/>
    <property type="evidence" value="ECO:0000314"/>
    <property type="project" value="GO_Central"/>
</dbReference>
<dbReference type="GO" id="GO:0048471">
    <property type="term" value="C:perinuclear region of cytoplasm"/>
    <property type="evidence" value="ECO:0000314"/>
    <property type="project" value="UniProtKB"/>
</dbReference>
<dbReference type="GO" id="GO:0031105">
    <property type="term" value="C:septin complex"/>
    <property type="evidence" value="ECO:0000314"/>
    <property type="project" value="UniProtKB"/>
</dbReference>
<dbReference type="GO" id="GO:0005940">
    <property type="term" value="C:septin ring"/>
    <property type="evidence" value="ECO:0000318"/>
    <property type="project" value="GO_Central"/>
</dbReference>
<dbReference type="GO" id="GO:0001725">
    <property type="term" value="C:stress fiber"/>
    <property type="evidence" value="ECO:0000314"/>
    <property type="project" value="UniProtKB"/>
</dbReference>
<dbReference type="GO" id="GO:0045296">
    <property type="term" value="F:cadherin binding"/>
    <property type="evidence" value="ECO:0007005"/>
    <property type="project" value="BHF-UCL"/>
</dbReference>
<dbReference type="GO" id="GO:0005525">
    <property type="term" value="F:GTP binding"/>
    <property type="evidence" value="ECO:0007669"/>
    <property type="project" value="UniProtKB-KW"/>
</dbReference>
<dbReference type="GO" id="GO:0003924">
    <property type="term" value="F:GTPase activity"/>
    <property type="evidence" value="ECO:0000318"/>
    <property type="project" value="GO_Central"/>
</dbReference>
<dbReference type="GO" id="GO:0060090">
    <property type="term" value="F:molecular adaptor activity"/>
    <property type="evidence" value="ECO:0000318"/>
    <property type="project" value="GO_Central"/>
</dbReference>
<dbReference type="GO" id="GO:0030036">
    <property type="term" value="P:actin cytoskeleton organization"/>
    <property type="evidence" value="ECO:0007669"/>
    <property type="project" value="Ensembl"/>
</dbReference>
<dbReference type="GO" id="GO:0061640">
    <property type="term" value="P:cytoskeleton-dependent cytokinesis"/>
    <property type="evidence" value="ECO:0000318"/>
    <property type="project" value="GO_Central"/>
</dbReference>
<dbReference type="GO" id="GO:1902857">
    <property type="term" value="P:positive regulation of non-motile cilium assembly"/>
    <property type="evidence" value="ECO:0000315"/>
    <property type="project" value="GO_Central"/>
</dbReference>
<dbReference type="GO" id="GO:0008104">
    <property type="term" value="P:protein localization"/>
    <property type="evidence" value="ECO:0000318"/>
    <property type="project" value="GO_Central"/>
</dbReference>
<dbReference type="GO" id="GO:0032185">
    <property type="term" value="P:septin cytoskeleton organization"/>
    <property type="evidence" value="ECO:0007669"/>
    <property type="project" value="Ensembl"/>
</dbReference>
<dbReference type="CDD" id="cd01850">
    <property type="entry name" value="CDC_Septin"/>
    <property type="match status" value="1"/>
</dbReference>
<dbReference type="FunFam" id="3.40.50.300:FF:000143">
    <property type="entry name" value="septin-9 isoform X1"/>
    <property type="match status" value="1"/>
</dbReference>
<dbReference type="Gene3D" id="3.40.50.300">
    <property type="entry name" value="P-loop containing nucleotide triphosphate hydrolases"/>
    <property type="match status" value="1"/>
</dbReference>
<dbReference type="InterPro" id="IPR030379">
    <property type="entry name" value="G_SEPTIN_dom"/>
</dbReference>
<dbReference type="InterPro" id="IPR027417">
    <property type="entry name" value="P-loop_NTPase"/>
</dbReference>
<dbReference type="InterPro" id="IPR016491">
    <property type="entry name" value="Septin"/>
</dbReference>
<dbReference type="PANTHER" id="PTHR18884">
    <property type="entry name" value="SEPTIN"/>
    <property type="match status" value="1"/>
</dbReference>
<dbReference type="Pfam" id="PF00735">
    <property type="entry name" value="Septin"/>
    <property type="match status" value="1"/>
</dbReference>
<dbReference type="SUPFAM" id="SSF52540">
    <property type="entry name" value="P-loop containing nucleoside triphosphate hydrolases"/>
    <property type="match status" value="1"/>
</dbReference>
<dbReference type="PROSITE" id="PS51719">
    <property type="entry name" value="G_SEPTIN"/>
    <property type="match status" value="1"/>
</dbReference>
<sequence length="586" mass="65401">MKKSYSGGTRTSSGRLRRLGDSSGPALKRSFEVEEVETPNSTPPRRVQTPLLRATVASSTQKFQDLGVKNSEPSARHVDSLSQRSPKASLRRVELSGPKAAEPVSRRTELSIDISSKQVENAGAIGPSRFGLKRAEVLGHKTPEPAPRRTEITIVKPQESAHRRMEPPASKVPEVPTAPATDAAPKRVEIQMPKPAEAPTAPSPAQTLENSEPAPVSQLQSRLEPKPQPPVAEATPRSQEATEAAPSCVGDMADTPRDAGLKQAPASRNEKAPVDFGYVGIDSILEQMRRKAMKQGFEFNIMVVGQSGLGKSTLINTLFKSKISRKSVQPTSEERIPKTIEIKSITHDIEEKGVRMKLTVIDTPGFGDHINNENCWQPIMKFINDQYEKYLQEEVNINRKKRIPDTRVHCCLYFIPATGHSLRPLDIEFMKRLSKVVNIVPVIAKADTLTLEERVHFKQRITADLLSNGIDVYPQKEFDEDSEDRLVNEKFREMIPFAVVGSDHEYQVNGKRILGRKTKWGTIEVENTTHCEFAYLRDLLIRTHMQNIKDITSSIHFEAYRVKRLNEGSSAMANGMEEKEPEAPEM</sequence>
<proteinExistence type="evidence at protein level"/>
<keyword id="KW-0002">3D-structure</keyword>
<keyword id="KW-0007">Acetylation</keyword>
<keyword id="KW-0025">Alternative splicing</keyword>
<keyword id="KW-0131">Cell cycle</keyword>
<keyword id="KW-0132">Cell division</keyword>
<keyword id="KW-0160">Chromosomal rearrangement</keyword>
<keyword id="KW-0963">Cytoplasm</keyword>
<keyword id="KW-0206">Cytoskeleton</keyword>
<keyword id="KW-0225">Disease variant</keyword>
<keyword id="KW-0342">GTP-binding</keyword>
<keyword id="KW-0547">Nucleotide-binding</keyword>
<keyword id="KW-0597">Phosphoprotein</keyword>
<keyword id="KW-1267">Proteomics identification</keyword>
<keyword id="KW-1185">Reference proteome</keyword>
<feature type="chain" id="PRO_0000173535" description="Septin-9">
    <location>
        <begin position="1"/>
        <end position="586"/>
    </location>
</feature>
<feature type="domain" description="Septin-type G" evidence="3">
    <location>
        <begin position="295"/>
        <end position="567"/>
    </location>
</feature>
<feature type="region of interest" description="Disordered" evidence="4">
    <location>
        <begin position="1"/>
        <end position="49"/>
    </location>
</feature>
<feature type="region of interest" description="Disordered" evidence="4">
    <location>
        <begin position="62"/>
        <end position="108"/>
    </location>
</feature>
<feature type="region of interest" description="Disordered" evidence="4">
    <location>
        <begin position="134"/>
        <end position="268"/>
    </location>
</feature>
<feature type="region of interest" description="G1 motif" evidence="3">
    <location>
        <begin position="305"/>
        <end position="312"/>
    </location>
</feature>
<feature type="region of interest" description="G3 motif" evidence="3">
    <location>
        <begin position="362"/>
        <end position="365"/>
    </location>
</feature>
<feature type="region of interest" description="G4 motif" evidence="3">
    <location>
        <begin position="444"/>
        <end position="447"/>
    </location>
</feature>
<feature type="compositionally biased region" description="Low complexity" evidence="4">
    <location>
        <begin position="1"/>
        <end position="14"/>
    </location>
</feature>
<feature type="compositionally biased region" description="Basic and acidic residues" evidence="4">
    <location>
        <begin position="134"/>
        <end position="151"/>
    </location>
</feature>
<feature type="binding site" evidence="1">
    <location>
        <begin position="305"/>
        <end position="312"/>
    </location>
    <ligand>
        <name>GTP</name>
        <dbReference type="ChEBI" id="CHEBI:37565"/>
    </ligand>
</feature>
<feature type="binding site" evidence="1">
    <location>
        <position position="339"/>
    </location>
    <ligand>
        <name>GTP</name>
        <dbReference type="ChEBI" id="CHEBI:37565"/>
    </ligand>
</feature>
<feature type="binding site" evidence="1">
    <location>
        <position position="365"/>
    </location>
    <ligand>
        <name>GTP</name>
        <dbReference type="ChEBI" id="CHEBI:37565"/>
    </ligand>
</feature>
<feature type="binding site" evidence="1">
    <location>
        <begin position="445"/>
        <end position="453"/>
    </location>
    <ligand>
        <name>GTP</name>
        <dbReference type="ChEBI" id="CHEBI:37565"/>
    </ligand>
</feature>
<feature type="binding site" evidence="1">
    <location>
        <position position="501"/>
    </location>
    <ligand>
        <name>GTP</name>
        <dbReference type="ChEBI" id="CHEBI:37565"/>
    </ligand>
</feature>
<feature type="binding site" evidence="1">
    <location>
        <position position="516"/>
    </location>
    <ligand>
        <name>GTP</name>
        <dbReference type="ChEBI" id="CHEBI:37565"/>
    </ligand>
</feature>
<feature type="modified residue" description="N-acetylmethionine" evidence="42">
    <location>
        <position position="1"/>
    </location>
</feature>
<feature type="modified residue" description="Phosphoserine" evidence="43">
    <location>
        <position position="22"/>
    </location>
</feature>
<feature type="modified residue" description="Phosphoserine" evidence="35 37 38 39 40 41 43">
    <location>
        <position position="30"/>
    </location>
</feature>
<feature type="modified residue" description="Phosphothreonine" evidence="38">
    <location>
        <position position="38"/>
    </location>
</feature>
<feature type="modified residue" description="Phosphothreonine" evidence="35 38 43">
    <location>
        <position position="42"/>
    </location>
</feature>
<feature type="modified residue" description="Phosphothreonine" evidence="43">
    <location>
        <position position="49"/>
    </location>
</feature>
<feature type="modified residue" description="N6-acetyllysine" evidence="2">
    <location>
        <position position="62"/>
    </location>
</feature>
<feature type="modified residue" description="Phosphoserine" evidence="40">
    <location>
        <position position="82"/>
    </location>
</feature>
<feature type="modified residue" description="Phosphoserine" evidence="36 40 41 43">
    <location>
        <position position="85"/>
    </location>
</feature>
<feature type="modified residue" description="Phosphoserine" evidence="43">
    <location>
        <position position="89"/>
    </location>
</feature>
<feature type="modified residue" description="Phosphoserine" evidence="40">
    <location>
        <position position="96"/>
    </location>
</feature>
<feature type="modified residue" description="Phosphothreonine" evidence="40 43">
    <location>
        <position position="142"/>
    </location>
</feature>
<feature type="modified residue" description="Phosphotyrosine" evidence="39">
    <location>
        <position position="278"/>
    </location>
</feature>
<feature type="modified residue" description="Phosphoserine" evidence="41">
    <location>
        <position position="327"/>
    </location>
</feature>
<feature type="modified residue" description="Phosphoserine" evidence="43">
    <location>
        <position position="332"/>
    </location>
</feature>
<feature type="splice variant" id="VSP_012335" description="In isoform 4." evidence="28 29">
    <location>
        <begin position="1"/>
        <end position="251"/>
    </location>
</feature>
<feature type="splice variant" id="VSP_038315" description="In isoform 9." evidence="29">
    <location>
        <begin position="1"/>
        <end position="224"/>
    </location>
</feature>
<feature type="splice variant" id="VSP_012336" description="In isoform 3." evidence="27 28 29 30">
    <location>
        <begin position="1"/>
        <end position="164"/>
    </location>
</feature>
<feature type="splice variant" id="VSP_038316" description="In isoform 8." evidence="29">
    <location>
        <begin position="1"/>
        <end position="112"/>
    </location>
</feature>
<feature type="splice variant" id="VSP_012337" description="In isoform 2." evidence="26 28 30 31 32">
    <original>MKKSYSGGTRTSSGRLRRLGDSSGP</original>
    <variation>MERDRIS</variation>
    <location>
        <begin position="1"/>
        <end position="25"/>
    </location>
</feature>
<feature type="splice variant" id="VSP_012338" description="In isoform 5." evidence="28 29">
    <original>MKKSYSGGTRTSSGRLRRLGDSSGP</original>
    <variation>MSDPAVNAQLDGIISDFE</variation>
    <location>
        <begin position="1"/>
        <end position="25"/>
    </location>
</feature>
<feature type="splice variant" id="VSP_038317" description="In isoform 7." evidence="29">
    <location>
        <begin position="7"/>
        <end position="25"/>
    </location>
</feature>
<feature type="splice variant" id="VSP_038318" description="In isoform 8." evidence="29">
    <original>DISSKQVENAGAIGPSRFGLKRAEVLGHKTPEPAPRRTEITIVKPQESAHRRMEPPASKVPEVPTAPATDAAPKRVEIQMPKPAEAPTAPSPAQTLENSEPAPVSQLQSRLEPKPQPPVAEATPRSQE</original>
    <variation>MGSSFWEGLQVAVGLPQGCWPQGLDSGEPAEGGQLEAAPVCIVTRQSKETAGPTLGRGGWRQGSLRRGKGTSCRCRQLSPGHGPGRLTGCGECHRLPCRGLVSGFTGLRGQEEDDLAFCLATIGSDRQ</variation>
    <location>
        <begin position="113"/>
        <end position="240"/>
    </location>
</feature>
<feature type="splice variant" id="VSP_038319" description="In isoform 9." evidence="29">
    <original>PKPQPPVAEATPRSQE</original>
    <variation>MAGAGCTGTWSWLWGT</variation>
    <location>
        <begin position="225"/>
        <end position="240"/>
    </location>
</feature>
<feature type="sequence variant" id="VAR_020667" description="In dbSNP:rs202079794." evidence="8">
    <original>R</original>
    <variation>C</variation>
    <location>
        <position position="76"/>
    </location>
</feature>
<feature type="sequence variant" id="VAR_033101" description="In HNA; dbSNP:rs80338761." evidence="16 17 20 22">
    <original>R</original>
    <variation>W</variation>
    <location>
        <position position="106"/>
    </location>
</feature>
<feature type="sequence variant" id="VAR_033102" description="In HNA; dbSNP:rs80338762." evidence="16 17 22">
    <original>S</original>
    <variation>F</variation>
    <location>
        <position position="111"/>
    </location>
</feature>
<feature type="sequence variant" id="VAR_020668" description="In dbSNP:rs34587622." evidence="8 10 22">
    <original>P</original>
    <variation>L</variation>
    <location>
        <position position="145"/>
    </location>
</feature>
<feature type="sequence variant" id="VAR_020669" description="In dbSNP:rs2627223." evidence="5 6 7 8 10 12 19 23 24 25">
    <original>M</original>
    <variation>V</variation>
    <location>
        <position position="576"/>
    </location>
</feature>
<feature type="sequence conflict" description="In Ref. 5; BAG64494." evidence="33" ref="5">
    <original>D</original>
    <variation>G</variation>
    <location>
        <position position="251"/>
    </location>
</feature>
<feature type="sequence conflict" description="In Ref. 5; BAB14057." evidence="33" ref="5">
    <original>V</original>
    <variation>E</variation>
    <location>
        <position position="487"/>
    </location>
</feature>
<feature type="strand" evidence="45">
    <location>
        <begin position="297"/>
        <end position="305"/>
    </location>
</feature>
<feature type="helix" evidence="45">
    <location>
        <begin position="311"/>
        <end position="322"/>
    </location>
</feature>
<feature type="strand" evidence="45">
    <location>
        <begin position="343"/>
        <end position="351"/>
    </location>
</feature>
<feature type="strand" evidence="45">
    <location>
        <begin position="354"/>
        <end position="362"/>
    </location>
</feature>
<feature type="strand" evidence="45">
    <location>
        <begin position="369"/>
        <end position="371"/>
    </location>
</feature>
<feature type="turn" evidence="45">
    <location>
        <begin position="373"/>
        <end position="376"/>
    </location>
</feature>
<feature type="helix" evidence="45">
    <location>
        <begin position="377"/>
        <end position="395"/>
    </location>
</feature>
<feature type="strand" evidence="45">
    <location>
        <begin position="410"/>
        <end position="415"/>
    </location>
</feature>
<feature type="strand" evidence="46">
    <location>
        <begin position="419"/>
        <end position="421"/>
    </location>
</feature>
<feature type="helix" evidence="45">
    <location>
        <begin position="424"/>
        <end position="434"/>
    </location>
</feature>
<feature type="strand" evidence="45">
    <location>
        <begin position="437"/>
        <end position="443"/>
    </location>
</feature>
<feature type="helix" evidence="45">
    <location>
        <begin position="446"/>
        <end position="448"/>
    </location>
</feature>
<feature type="helix" evidence="45">
    <location>
        <begin position="451"/>
        <end position="467"/>
    </location>
</feature>
<feature type="strand" evidence="44">
    <location>
        <begin position="472"/>
        <end position="474"/>
    </location>
</feature>
<feature type="helix" evidence="45">
    <location>
        <begin position="476"/>
        <end position="478"/>
    </location>
</feature>
<feature type="helix" evidence="45">
    <location>
        <begin position="482"/>
        <end position="494"/>
    </location>
</feature>
<feature type="strand" evidence="45">
    <location>
        <begin position="496"/>
        <end position="498"/>
    </location>
</feature>
<feature type="strand" evidence="45">
    <location>
        <begin position="503"/>
        <end position="508"/>
    </location>
</feature>
<feature type="strand" evidence="45">
    <location>
        <begin position="511"/>
        <end position="517"/>
    </location>
</feature>
<feature type="strand" evidence="45">
    <location>
        <begin position="522"/>
        <end position="524"/>
    </location>
</feature>
<feature type="turn" evidence="45">
    <location>
        <begin position="528"/>
        <end position="530"/>
    </location>
</feature>
<feature type="helix" evidence="45">
    <location>
        <begin position="533"/>
        <end position="539"/>
    </location>
</feature>
<feature type="helix" evidence="45">
    <location>
        <begin position="542"/>
        <end position="554"/>
    </location>
</feature>
<feature type="helix" evidence="45">
    <location>
        <begin position="556"/>
        <end position="567"/>
    </location>
</feature>
<feature type="modified residue" description="N-acetylmethionine" evidence="42">
    <location sequence="Q9UHD8-3">
        <position position="1"/>
    </location>
</feature>
<gene>
    <name evidence="34" type="primary">SEPTIN9</name>
    <name type="synonym">KIAA0991</name>
    <name type="synonym">MSF</name>
    <name type="synonym">SEPT9</name>
</gene>
<accession>Q9UHD8</accession>
<accession>A8K2V3</accession>
<accession>B3KPM0</accession>
<accession>B4DTL9</accession>
<accession>B4E0N2</accession>
<accession>B4E274</accession>
<accession>B7Z654</accession>
<accession>Q96QF3</accession>
<accession>Q96QF4</accession>
<accession>Q96QF5</accession>
<accession>Q9HA04</accession>
<accession>Q9UG40</accession>
<accession>Q9Y5W4</accession>
<protein>
    <recommendedName>
        <fullName>Septin-9</fullName>
    </recommendedName>
    <alternativeName>
        <fullName>MLL septin-like fusion protein MSF-A</fullName>
        <shortName>MLL septin-like fusion protein</shortName>
    </alternativeName>
    <alternativeName>
        <fullName>Ovarian/Breast septin</fullName>
        <shortName>Ov/Br septin</shortName>
    </alternativeName>
    <alternativeName>
        <fullName>Septin D1</fullName>
    </alternativeName>
</protein>
<reference key="1">
    <citation type="journal article" date="1999" name="Proc. Natl. Acad. Sci. U.S.A.">
        <title>MSF (MLL septin-like fusion), a fusion partner gene of MLL, in a therapy-related acute myeloid leukemia with a t(11;17)(q23;q25).</title>
        <authorList>
            <person name="Osaka M."/>
            <person name="Rowley J.D."/>
            <person name="Zeleznik-Le N.J."/>
        </authorList>
    </citation>
    <scope>NUCLEOTIDE SEQUENCE [MRNA] (ISOFORM 2)</scope>
    <scope>VARIANT VAL-576</scope>
    <scope>TISSUE SPECIFICITY</scope>
    <scope>DISEASE</scope>
    <scope>CHROMOSOMAL TRANSLOCATION</scope>
</reference>
<reference key="2">
    <citation type="journal article" date="2000" name="Cancer Res.">
        <title>Isolation and mapping of a human septin gene to a region on chromosome 17q, commonly deleted in sporadic epithelial ovarian tumors.</title>
        <authorList>
            <person name="Russell S.E.H."/>
            <person name="McIlhatton M.A."/>
            <person name="Burrows J.F."/>
            <person name="Donaghy P.G."/>
            <person name="Chanduloy S."/>
            <person name="Petty E.M."/>
            <person name="Kalikin L.M."/>
            <person name="Church S.W."/>
            <person name="McIlroy S."/>
            <person name="Harkin D.P."/>
            <person name="Keilty G.W."/>
            <person name="Cranston A.N."/>
            <person name="Weissenbach J."/>
            <person name="Hickey I."/>
            <person name="Johnston P.G."/>
        </authorList>
    </citation>
    <scope>NUCLEOTIDE SEQUENCE [MRNA] (ISOFORMS 2; 3; 4 AND 5)</scope>
    <scope>VARIANTS CYS-76; LEU-145 AND VAL-576</scope>
</reference>
<reference key="3">
    <citation type="journal article" date="2000" name="Genomics">
        <title>Genomic and expression analyses of alternatively spliced transcripts of the MLL septin-like fusion gene (MSF) that map to a 17q25 region of loss in breast and ovarian tumors.</title>
        <authorList>
            <person name="Kalikin L.M."/>
            <person name="Sims H.L."/>
            <person name="Petty E.M."/>
        </authorList>
    </citation>
    <scope>NUCLEOTIDE SEQUENCE [MRNA] (ISOFORMS 1 AND 3)</scope>
    <scope>VARIANT VAL-576</scope>
    <scope>TISSUE SPECIFICITY</scope>
    <scope>ALTERNATIVE SPLICING</scope>
</reference>
<reference key="4">
    <citation type="submission" date="1999-04" db="EMBL/GenBank/DDBJ databases">
        <title>Novel human cell division control protein septin D1.</title>
        <authorList>
            <person name="Zhang W."/>
            <person name="He L."/>
            <person name="Wan T."/>
            <person name="Yuan Z."/>
            <person name="Zhu X."/>
            <person name="Cao X."/>
        </authorList>
    </citation>
    <scope>NUCLEOTIDE SEQUENCE [MRNA] (ISOFORM 2)</scope>
    <scope>VARIANT VAL-576</scope>
</reference>
<reference key="5">
    <citation type="journal article" date="2004" name="Nat. Genet.">
        <title>Complete sequencing and characterization of 21,243 full-length human cDNAs.</title>
        <authorList>
            <person name="Ota T."/>
            <person name="Suzuki Y."/>
            <person name="Nishikawa T."/>
            <person name="Otsuki T."/>
            <person name="Sugiyama T."/>
            <person name="Irie R."/>
            <person name="Wakamatsu A."/>
            <person name="Hayashi K."/>
            <person name="Sato H."/>
            <person name="Nagai K."/>
            <person name="Kimura K."/>
            <person name="Makita H."/>
            <person name="Sekine M."/>
            <person name="Obayashi M."/>
            <person name="Nishi T."/>
            <person name="Shibahara T."/>
            <person name="Tanaka T."/>
            <person name="Ishii S."/>
            <person name="Yamamoto J."/>
            <person name="Saito K."/>
            <person name="Kawai Y."/>
            <person name="Isono Y."/>
            <person name="Nakamura Y."/>
            <person name="Nagahari K."/>
            <person name="Murakami K."/>
            <person name="Yasuda T."/>
            <person name="Iwayanagi T."/>
            <person name="Wagatsuma M."/>
            <person name="Shiratori A."/>
            <person name="Sudo H."/>
            <person name="Hosoiri T."/>
            <person name="Kaku Y."/>
            <person name="Kodaira H."/>
            <person name="Kondo H."/>
            <person name="Sugawara M."/>
            <person name="Takahashi M."/>
            <person name="Kanda K."/>
            <person name="Yokoi T."/>
            <person name="Furuya T."/>
            <person name="Kikkawa E."/>
            <person name="Omura Y."/>
            <person name="Abe K."/>
            <person name="Kamihara K."/>
            <person name="Katsuta N."/>
            <person name="Sato K."/>
            <person name="Tanikawa M."/>
            <person name="Yamazaki M."/>
            <person name="Ninomiya K."/>
            <person name="Ishibashi T."/>
            <person name="Yamashita H."/>
            <person name="Murakawa K."/>
            <person name="Fujimori K."/>
            <person name="Tanai H."/>
            <person name="Kimata M."/>
            <person name="Watanabe M."/>
            <person name="Hiraoka S."/>
            <person name="Chiba Y."/>
            <person name="Ishida S."/>
            <person name="Ono Y."/>
            <person name="Takiguchi S."/>
            <person name="Watanabe S."/>
            <person name="Yosida M."/>
            <person name="Hotuta T."/>
            <person name="Kusano J."/>
            <person name="Kanehori K."/>
            <person name="Takahashi-Fujii A."/>
            <person name="Hara H."/>
            <person name="Tanase T.-O."/>
            <person name="Nomura Y."/>
            <person name="Togiya S."/>
            <person name="Komai F."/>
            <person name="Hara R."/>
            <person name="Takeuchi K."/>
            <person name="Arita M."/>
            <person name="Imose N."/>
            <person name="Musashino K."/>
            <person name="Yuuki H."/>
            <person name="Oshima A."/>
            <person name="Sasaki N."/>
            <person name="Aotsuka S."/>
            <person name="Yoshikawa Y."/>
            <person name="Matsunawa H."/>
            <person name="Ichihara T."/>
            <person name="Shiohata N."/>
            <person name="Sano S."/>
            <person name="Moriya S."/>
            <person name="Momiyama H."/>
            <person name="Satoh N."/>
            <person name="Takami S."/>
            <person name="Terashima Y."/>
            <person name="Suzuki O."/>
            <person name="Nakagawa S."/>
            <person name="Senoh A."/>
            <person name="Mizoguchi H."/>
            <person name="Goto Y."/>
            <person name="Shimizu F."/>
            <person name="Wakebe H."/>
            <person name="Hishigaki H."/>
            <person name="Watanabe T."/>
            <person name="Sugiyama A."/>
            <person name="Takemoto M."/>
            <person name="Kawakami B."/>
            <person name="Yamazaki M."/>
            <person name="Watanabe K."/>
            <person name="Kumagai A."/>
            <person name="Itakura S."/>
            <person name="Fukuzumi Y."/>
            <person name="Fujimori Y."/>
            <person name="Komiyama M."/>
            <person name="Tashiro H."/>
            <person name="Tanigami A."/>
            <person name="Fujiwara T."/>
            <person name="Ono T."/>
            <person name="Yamada K."/>
            <person name="Fujii Y."/>
            <person name="Ozaki K."/>
            <person name="Hirao M."/>
            <person name="Ohmori Y."/>
            <person name="Kawabata A."/>
            <person name="Hikiji T."/>
            <person name="Kobatake N."/>
            <person name="Inagaki H."/>
            <person name="Ikema Y."/>
            <person name="Okamoto S."/>
            <person name="Okitani R."/>
            <person name="Kawakami T."/>
            <person name="Noguchi S."/>
            <person name="Itoh T."/>
            <person name="Shigeta K."/>
            <person name="Senba T."/>
            <person name="Matsumura K."/>
            <person name="Nakajima Y."/>
            <person name="Mizuno T."/>
            <person name="Morinaga M."/>
            <person name="Sasaki M."/>
            <person name="Togashi T."/>
            <person name="Oyama M."/>
            <person name="Hata H."/>
            <person name="Watanabe M."/>
            <person name="Komatsu T."/>
            <person name="Mizushima-Sugano J."/>
            <person name="Satoh T."/>
            <person name="Shirai Y."/>
            <person name="Takahashi Y."/>
            <person name="Nakagawa K."/>
            <person name="Okumura K."/>
            <person name="Nagase T."/>
            <person name="Nomura N."/>
            <person name="Kikuchi H."/>
            <person name="Masuho Y."/>
            <person name="Yamashita R."/>
            <person name="Nakai K."/>
            <person name="Yada T."/>
            <person name="Nakamura Y."/>
            <person name="Ohara O."/>
            <person name="Isogai T."/>
            <person name="Sugano S."/>
        </authorList>
    </citation>
    <scope>NUCLEOTIDE SEQUENCE [LARGE SCALE MRNA] (ISOFORMS 3; 4; 5; 7; 8 AND 9)</scope>
    <scope>VARIANTS LEU-145 AND VAL-576</scope>
    <source>
        <tissue>Fetal brain</tissue>
        <tissue>Mammary gland</tissue>
        <tissue>Placenta</tissue>
        <tissue>Teratocarcinoma</tissue>
        <tissue>Thymus</tissue>
        <tissue>Tongue</tissue>
        <tissue>Trachea</tissue>
    </source>
</reference>
<reference key="6">
    <citation type="submission" date="2003-05" db="EMBL/GenBank/DDBJ databases">
        <title>Cloning of human full-length CDSs in BD Creator(TM) system donor vector.</title>
        <authorList>
            <person name="Kalnine N."/>
            <person name="Chen X."/>
            <person name="Rolfs A."/>
            <person name="Halleck A."/>
            <person name="Hines L."/>
            <person name="Eisenstein S."/>
            <person name="Koundinya M."/>
            <person name="Raphael J."/>
            <person name="Moreira D."/>
            <person name="Kelley T."/>
            <person name="LaBaer J."/>
            <person name="Lin Y."/>
            <person name="Phelan M."/>
            <person name="Farmer A."/>
        </authorList>
    </citation>
    <scope>NUCLEOTIDE SEQUENCE [LARGE SCALE MRNA] (ISOFORM 2)</scope>
    <scope>VARIANT VAL-576</scope>
</reference>
<reference key="7">
    <citation type="submission" date="2005-07" db="EMBL/GenBank/DDBJ databases">
        <authorList>
            <person name="Mural R.J."/>
            <person name="Istrail S."/>
            <person name="Sutton G.G."/>
            <person name="Florea L."/>
            <person name="Halpern A.L."/>
            <person name="Mobarry C.M."/>
            <person name="Lippert R."/>
            <person name="Walenz B."/>
            <person name="Shatkay H."/>
            <person name="Dew I."/>
            <person name="Miller J.R."/>
            <person name="Flanigan M.J."/>
            <person name="Edwards N.J."/>
            <person name="Bolanos R."/>
            <person name="Fasulo D."/>
            <person name="Halldorsson B.V."/>
            <person name="Hannenhalli S."/>
            <person name="Turner R."/>
            <person name="Yooseph S."/>
            <person name="Lu F."/>
            <person name="Nusskern D.R."/>
            <person name="Shue B.C."/>
            <person name="Zheng X.H."/>
            <person name="Zhong F."/>
            <person name="Delcher A.L."/>
            <person name="Huson D.H."/>
            <person name="Kravitz S.A."/>
            <person name="Mouchard L."/>
            <person name="Reinert K."/>
            <person name="Remington K.A."/>
            <person name="Clark A.G."/>
            <person name="Waterman M.S."/>
            <person name="Eichler E.E."/>
            <person name="Adams M.D."/>
            <person name="Hunkapiller M.W."/>
            <person name="Myers E.W."/>
            <person name="Venter J.C."/>
        </authorList>
    </citation>
    <scope>NUCLEOTIDE SEQUENCE [LARGE SCALE GENOMIC DNA]</scope>
    <scope>VARIANT VAL-576</scope>
</reference>
<reference key="8">
    <citation type="journal article" date="2004" name="Genome Res.">
        <title>The status, quality, and expansion of the NIH full-length cDNA project: the Mammalian Gene Collection (MGC).</title>
        <authorList>
            <consortium name="The MGC Project Team"/>
        </authorList>
    </citation>
    <scope>NUCLEOTIDE SEQUENCE [LARGE SCALE MRNA] (ISOFORMS 2 AND 3)</scope>
    <scope>VARIANT VAL-576</scope>
    <source>
        <tissue>Eye</tissue>
        <tissue>Skin</tissue>
    </source>
</reference>
<reference key="9">
    <citation type="journal article" date="1999" name="DNA Res.">
        <title>Prediction of the coding sequences of unidentified human genes. XIII. The complete sequences of 100 new cDNA clones from brain which code for large proteins in vitro.</title>
        <authorList>
            <person name="Nagase T."/>
            <person name="Ishikawa K."/>
            <person name="Suyama M."/>
            <person name="Kikuno R."/>
            <person name="Hirosawa M."/>
            <person name="Miyajima N."/>
            <person name="Tanaka A."/>
            <person name="Kotani H."/>
            <person name="Nomura N."/>
            <person name="Ohara O."/>
        </authorList>
    </citation>
    <scope>NUCLEOTIDE SEQUENCE [LARGE SCALE MRNA] OF 26-586</scope>
    <scope>VARIANT VAL-576</scope>
    <source>
        <tissue>Brain</tissue>
    </source>
</reference>
<reference key="10">
    <citation type="journal article" date="2007" name="BMC Genomics">
        <title>The full-ORF clone resource of the German cDNA consortium.</title>
        <authorList>
            <person name="Bechtel S."/>
            <person name="Rosenfelder H."/>
            <person name="Duda A."/>
            <person name="Schmidt C.P."/>
            <person name="Ernst U."/>
            <person name="Wellenreuther R."/>
            <person name="Mehrle A."/>
            <person name="Schuster C."/>
            <person name="Bahr A."/>
            <person name="Bloecker H."/>
            <person name="Heubner D."/>
            <person name="Hoerlein A."/>
            <person name="Michel G."/>
            <person name="Wedler H."/>
            <person name="Koehrer K."/>
            <person name="Ottenwaelder B."/>
            <person name="Poustka A."/>
            <person name="Wiemann S."/>
            <person name="Schupp I."/>
        </authorList>
    </citation>
    <scope>NUCLEOTIDE SEQUENCE [LARGE SCALE MRNA] OF 353-586</scope>
    <scope>VARIANT VAL-576</scope>
    <source>
        <tissue>Testis</tissue>
    </source>
</reference>
<reference key="11">
    <citation type="journal article" date="2001" name="Oncogene">
        <title>Genomic organization, complex splicing pattern and expression of a human septin gene on chromosome 17q25.3.</title>
        <authorList>
            <person name="McIlhatton M.A."/>
            <person name="Burrows J.F."/>
            <person name="Donaghy P.G."/>
            <person name="Chanduloy S."/>
            <person name="Johnston P.G."/>
            <person name="Russell S.E."/>
        </authorList>
    </citation>
    <scope>TISSUE SPECIFICITY</scope>
    <scope>ALTERNATIVE SPLICING</scope>
</reference>
<reference key="12">
    <citation type="journal article" date="2004" name="J. Biol. Chem.">
        <title>Biochemical and cell biological analyses of a mammalian septin complex, Sept7/9b/11.</title>
        <authorList>
            <person name="Nagata K."/>
            <person name="Asano T."/>
            <person name="Nozawa Y."/>
            <person name="Inagaki M."/>
        </authorList>
    </citation>
    <scope>INTERACTION WITH SEPTIN7 AND SEPTIN11</scope>
</reference>
<reference key="13">
    <citation type="journal article" date="2005" name="J. Pathol.">
        <title>Expression profiling the human septin gene family.</title>
        <authorList>
            <person name="Hall P.A."/>
            <person name="Jung K."/>
            <person name="Hillan K.J."/>
            <person name="Russell S.E.H."/>
        </authorList>
    </citation>
    <scope>TISSUE SPECIFICITY</scope>
</reference>
<reference key="14">
    <citation type="journal article" date="2005" name="Oncogene">
        <title>Cytoskeletal modification of Rho guanine nucleotide exchange factor activity: identification of a Rho guanine nucleotide exchange factor as a binding partner for Sept9b, a mammalian septin.</title>
        <authorList>
            <person name="Nagata K."/>
            <person name="Inagaki M."/>
        </authorList>
    </citation>
    <scope>INTERACTION WITH ARHGEF18</scope>
</reference>
<reference key="15">
    <citation type="journal article" date="2005" name="Oncogene">
        <title>Possible role of Rho/Rhotekin signaling in mammalian septin organization.</title>
        <authorList>
            <person name="Ito H."/>
            <person name="Iwamoto I."/>
            <person name="Morishita R."/>
            <person name="Nozawa Y."/>
            <person name="Narumiya S."/>
            <person name="Asano T."/>
            <person name="Nagata K."/>
        </authorList>
    </citation>
    <scope>INTERACTION WITH RTKN</scope>
</reference>
<reference key="16">
    <citation type="journal article" date="2006" name="Cell">
        <title>Global, in vivo, and site-specific phosphorylation dynamics in signaling networks.</title>
        <authorList>
            <person name="Olsen J.V."/>
            <person name="Blagoev B."/>
            <person name="Gnad F."/>
            <person name="Macek B."/>
            <person name="Kumar C."/>
            <person name="Mortensen P."/>
            <person name="Mann M."/>
        </authorList>
    </citation>
    <scope>PHOSPHORYLATION [LARGE SCALE ANALYSIS] AT SER-85</scope>
    <scope>IDENTIFICATION BY MASS SPECTROMETRY [LARGE SCALE ANALYSIS]</scope>
    <source>
        <tissue>Cervix carcinoma</tissue>
    </source>
</reference>
<reference key="17">
    <citation type="journal article" date="2006" name="Nat. Biotechnol.">
        <title>A probability-based approach for high-throughput protein phosphorylation analysis and site localization.</title>
        <authorList>
            <person name="Beausoleil S.A."/>
            <person name="Villen J."/>
            <person name="Gerber S.A."/>
            <person name="Rush J."/>
            <person name="Gygi S.P."/>
        </authorList>
    </citation>
    <scope>PHOSPHORYLATION [LARGE SCALE ANALYSIS] AT SER-30 AND THR-42</scope>
    <scope>IDENTIFICATION BY MASS SPECTROMETRY [LARGE SCALE ANALYSIS]</scope>
    <source>
        <tissue>Cervix carcinoma</tissue>
    </source>
</reference>
<reference key="18">
    <citation type="journal article" date="2007" name="Hum. Mutat.">
        <title>SEPT9 sequence alternations causing hereditary neuralgic amyotrophy are associated with altered interactions with SEPT4/SEPT11 and resistance to Rho/Rhotekin-signaling.</title>
        <authorList>
            <person name="Sudo K."/>
            <person name="Ito H."/>
            <person name="Iwamoto I."/>
            <person name="Morishita R."/>
            <person name="Asano T."/>
            <person name="Nagata K."/>
        </authorList>
    </citation>
    <scope>SUBCELLULAR LOCATION</scope>
    <scope>INTERACTION WITH SEPTIN4</scope>
    <scope>VARIANTS HNA TRP-106 AND PHE-111</scope>
</reference>
<reference key="19">
    <citation type="journal article" date="2007" name="Mamm. Genome">
        <title>Characterization of a SEPT9 interacting protein, SEPT14, a novel testis-specific septin.</title>
        <authorList>
            <person name="Peterson E.A."/>
            <person name="Kalikin L.M."/>
            <person name="Steels J.D."/>
            <person name="Estey M.P."/>
            <person name="Trimble W.S."/>
            <person name="Petty E.M."/>
        </authorList>
    </citation>
    <scope>INTERACTION WITH SEPTIN14</scope>
    <scope>SUBCELLULAR LOCATION</scope>
</reference>
<reference key="20">
    <citation type="journal article" date="2008" name="J. Proteome Res.">
        <title>Combining protein-based IMAC, peptide-based IMAC, and MudPIT for efficient phosphoproteomic analysis.</title>
        <authorList>
            <person name="Cantin G.T."/>
            <person name="Yi W."/>
            <person name="Lu B."/>
            <person name="Park S.K."/>
            <person name="Xu T."/>
            <person name="Lee J.-D."/>
            <person name="Yates J.R. III"/>
        </authorList>
    </citation>
    <scope>PHOSPHORYLATION [LARGE SCALE ANALYSIS] AT SER-30</scope>
    <scope>IDENTIFICATION BY MASS SPECTROMETRY [LARGE SCALE ANALYSIS]</scope>
    <source>
        <tissue>Cervix carcinoma</tissue>
    </source>
</reference>
<reference key="21">
    <citation type="journal article" date="2008" name="Proc. Natl. Acad. Sci. U.S.A.">
        <title>A quantitative atlas of mitotic phosphorylation.</title>
        <authorList>
            <person name="Dephoure N."/>
            <person name="Zhou C."/>
            <person name="Villen J."/>
            <person name="Beausoleil S.A."/>
            <person name="Bakalarski C.E."/>
            <person name="Elledge S.J."/>
            <person name="Gygi S.P."/>
        </authorList>
    </citation>
    <scope>PHOSPHORYLATION [LARGE SCALE ANALYSIS] AT SER-30; THR-38 AND THR-42</scope>
    <scope>IDENTIFICATION BY MASS SPECTROMETRY [LARGE SCALE ANALYSIS]</scope>
    <source>
        <tissue>Cervix carcinoma</tissue>
    </source>
</reference>
<reference key="22">
    <citation type="journal article" date="2009" name="Anal. Chem.">
        <title>Lys-N and trypsin cover complementary parts of the phosphoproteome in a refined SCX-based approach.</title>
        <authorList>
            <person name="Gauci S."/>
            <person name="Helbig A.O."/>
            <person name="Slijper M."/>
            <person name="Krijgsveld J."/>
            <person name="Heck A.J."/>
            <person name="Mohammed S."/>
        </authorList>
    </citation>
    <scope>IDENTIFICATION BY MASS SPECTROMETRY [LARGE SCALE ANALYSIS]</scope>
</reference>
<reference key="23">
    <citation type="journal article" date="2009" name="PLoS ONE">
        <title>Septins regulate bacterial entry into host cells.</title>
        <authorList>
            <person name="Mostowy S."/>
            <person name="Nam Tham T."/>
            <person name="Danckaert A."/>
            <person name="Guadagnini S."/>
            <person name="Boisson-Dupuis S."/>
            <person name="Pizarro-Cerda J."/>
            <person name="Cossart P."/>
        </authorList>
    </citation>
    <scope>INTERACTION WITH SEPTIN2; SEPTIN6; SEPTIN7 AND SEPTIN11</scope>
    <scope>ASSOCIATION WITH ACTIN FILAMENTS AND MICROTUBULES</scope>
</reference>
<reference key="24">
    <citation type="journal article" date="2009" name="Sci. Signal.">
        <title>Quantitative phosphoproteomic analysis of T cell receptor signaling reveals system-wide modulation of protein-protein interactions.</title>
        <authorList>
            <person name="Mayya V."/>
            <person name="Lundgren D.H."/>
            <person name="Hwang S.-I."/>
            <person name="Rezaul K."/>
            <person name="Wu L."/>
            <person name="Eng J.K."/>
            <person name="Rodionov V."/>
            <person name="Han D.K."/>
        </authorList>
    </citation>
    <scope>PHOSPHORYLATION [LARGE SCALE ANALYSIS] AT SER-30 AND TYR-278</scope>
    <scope>IDENTIFICATION BY MASS SPECTROMETRY [LARGE SCALE ANALYSIS]</scope>
    <source>
        <tissue>Leukemic T-cell</tissue>
    </source>
</reference>
<reference key="25">
    <citation type="journal article" date="2010" name="Sci. Signal.">
        <title>Quantitative phosphoproteomics reveals widespread full phosphorylation site occupancy during mitosis.</title>
        <authorList>
            <person name="Olsen J.V."/>
            <person name="Vermeulen M."/>
            <person name="Santamaria A."/>
            <person name="Kumar C."/>
            <person name="Miller M.L."/>
            <person name="Jensen L.J."/>
            <person name="Gnad F."/>
            <person name="Cox J."/>
            <person name="Jensen T.S."/>
            <person name="Nigg E.A."/>
            <person name="Brunak S."/>
            <person name="Mann M."/>
        </authorList>
    </citation>
    <scope>PHOSPHORYLATION [LARGE SCALE ANALYSIS] AT SER-30; SER-82; SER-85; SER-96 AND THR-142</scope>
    <scope>IDENTIFICATION BY MASS SPECTROMETRY [LARGE SCALE ANALYSIS]</scope>
    <source>
        <tissue>Cervix carcinoma</tissue>
    </source>
</reference>
<reference key="26">
    <citation type="journal article" date="2011" name="BMC Syst. Biol.">
        <title>Initial characterization of the human central proteome.</title>
        <authorList>
            <person name="Burkard T.R."/>
            <person name="Planyavsky M."/>
            <person name="Kaupe I."/>
            <person name="Breitwieser F.P."/>
            <person name="Buerckstuemmer T."/>
            <person name="Bennett K.L."/>
            <person name="Superti-Furga G."/>
            <person name="Colinge J."/>
        </authorList>
    </citation>
    <scope>IDENTIFICATION BY MASS SPECTROMETRY [LARGE SCALE ANALYSIS]</scope>
</reference>
<reference key="27">
    <citation type="journal article" date="2011" name="Sci. Signal.">
        <title>System-wide temporal characterization of the proteome and phosphoproteome of human embryonic stem cell differentiation.</title>
        <authorList>
            <person name="Rigbolt K.T."/>
            <person name="Prokhorova T.A."/>
            <person name="Akimov V."/>
            <person name="Henningsen J."/>
            <person name="Johansen P.T."/>
            <person name="Kratchmarova I."/>
            <person name="Kassem M."/>
            <person name="Mann M."/>
            <person name="Olsen J.V."/>
            <person name="Blagoev B."/>
        </authorList>
    </citation>
    <scope>PHOSPHORYLATION [LARGE SCALE ANALYSIS] AT SER-30; SER-85 AND SER-327</scope>
    <scope>IDENTIFICATION BY MASS SPECTROMETRY [LARGE SCALE ANALYSIS]</scope>
</reference>
<reference key="28">
    <citation type="journal article" date="2012" name="Proc. Natl. Acad. Sci. U.S.A.">
        <title>N-terminal acetylome analyses and functional insights of the N-terminal acetyltransferase NatB.</title>
        <authorList>
            <person name="Van Damme P."/>
            <person name="Lasa M."/>
            <person name="Polevoda B."/>
            <person name="Gazquez C."/>
            <person name="Elosegui-Artola A."/>
            <person name="Kim D.S."/>
            <person name="De Juan-Pardo E."/>
            <person name="Demeyer K."/>
            <person name="Hole K."/>
            <person name="Larrea E."/>
            <person name="Timmerman E."/>
            <person name="Prieto J."/>
            <person name="Arnesen T."/>
            <person name="Sherman F."/>
            <person name="Gevaert K."/>
            <person name="Aldabe R."/>
        </authorList>
    </citation>
    <scope>ACETYLATION [LARGE SCALE ANALYSIS] AT MET-1</scope>
    <scope>ACETYLATION [LARGE SCALE ANALYSIS] AT MET-1 (ISOFORM 3)</scope>
    <scope>IDENTIFICATION BY MASS SPECTROMETRY [LARGE SCALE ANALYSIS]</scope>
</reference>
<reference key="29">
    <citation type="journal article" date="2013" name="J. Proteome Res.">
        <title>Toward a comprehensive characterization of a human cancer cell phosphoproteome.</title>
        <authorList>
            <person name="Zhou H."/>
            <person name="Di Palma S."/>
            <person name="Preisinger C."/>
            <person name="Peng M."/>
            <person name="Polat A.N."/>
            <person name="Heck A.J."/>
            <person name="Mohammed S."/>
        </authorList>
    </citation>
    <scope>PHOSPHORYLATION [LARGE SCALE ANALYSIS] AT SER-22; SER-30; THR-42; THR-49; SER-85; SER-89; THR-142 AND SER-332</scope>
    <scope>IDENTIFICATION BY MASS SPECTROMETRY [LARGE SCALE ANALYSIS]</scope>
    <source>
        <tissue>Cervix carcinoma</tissue>
        <tissue>Erythroleukemia</tissue>
    </source>
</reference>
<reference key="30">
    <citation type="journal article" date="2014" name="J. Proteomics">
        <title>An enzyme assisted RP-RPLC approach for in-depth analysis of human liver phosphoproteome.</title>
        <authorList>
            <person name="Bian Y."/>
            <person name="Song C."/>
            <person name="Cheng K."/>
            <person name="Dong M."/>
            <person name="Wang F."/>
            <person name="Huang J."/>
            <person name="Sun D."/>
            <person name="Wang L."/>
            <person name="Ye M."/>
            <person name="Zou H."/>
        </authorList>
    </citation>
    <scope>IDENTIFICATION BY MASS SPECTROMETRY [LARGE SCALE ANALYSIS]</scope>
    <source>
        <tissue>Liver</tissue>
    </source>
</reference>
<reference key="31">
    <citation type="journal article" date="2015" name="Proteomics">
        <title>N-terminome analysis of the human mitochondrial proteome.</title>
        <authorList>
            <person name="Vaca Jacome A.S."/>
            <person name="Rabilloud T."/>
            <person name="Schaeffer-Reiss C."/>
            <person name="Rompais M."/>
            <person name="Ayoub D."/>
            <person name="Lane L."/>
            <person name="Bairoch A."/>
            <person name="Van Dorsselaer A."/>
            <person name="Carapito C."/>
        </authorList>
    </citation>
    <scope>IDENTIFICATION BY MASS SPECTROMETRY [LARGE SCALE ANALYSIS]</scope>
</reference>
<reference key="32">
    <citation type="journal article" date="2005" name="Nat. Genet.">
        <title>Mutations in SEPT9 cause hereditary neuralgic amyotrophy.</title>
        <authorList>
            <person name="Kuhlenbaeumer G."/>
            <person name="Hannibal M.C."/>
            <person name="Nelis E."/>
            <person name="Schirmacher A."/>
            <person name="Verpoorten N."/>
            <person name="Meuleman J."/>
            <person name="Watts G.D.J."/>
            <person name="De Vriendt E."/>
            <person name="Young P."/>
            <person name="Stoegbauer F."/>
            <person name="Halfter H."/>
            <person name="Irobi J."/>
            <person name="Goossens D."/>
            <person name="Del-Favero J."/>
            <person name="Betz B.G."/>
            <person name="Hor H."/>
            <person name="Kurlemann G."/>
            <person name="Bird T.D."/>
            <person name="Airaksinen E."/>
            <person name="Mononen T."/>
            <person name="Serradell A.P."/>
            <person name="Prats J.M."/>
            <person name="Van Broeckhoven C."/>
            <person name="De Jonghe P."/>
            <person name="Timmerman V."/>
            <person name="Ringelstein E.B."/>
            <person name="Chance P.F."/>
        </authorList>
    </citation>
    <scope>VARIANTS HNA TRP-106 AND PHE-111</scope>
</reference>
<reference key="33">
    <citation type="journal article" date="2008" name="Clin. Genet.">
        <title>Dysmorphic syndrome of hereditary neuralgic amyotrophy associated with a SEPT9 gene mutation -- a family study.</title>
        <authorList>
            <person name="Laccone F."/>
            <person name="Hannibal M.C."/>
            <person name="Neesen J."/>
            <person name="Grisold W."/>
            <person name="Chance P.F."/>
            <person name="Rehder H."/>
        </authorList>
    </citation>
    <scope>VARIANT HNA TRP-106</scope>
</reference>
<reference key="34">
    <citation type="journal article" date="2009" name="Neurology">
        <title>SEPT9 gene sequencing analysis reveals recurrent mutations in hereditary neuralgic amyotrophy.</title>
        <authorList>
            <person name="Hannibal M.C."/>
            <person name="Ruzzo E.K."/>
            <person name="Miller L.R."/>
            <person name="Betz B."/>
            <person name="Buchan J.G."/>
            <person name="Knutzen D.M."/>
            <person name="Barnett K."/>
            <person name="Landsverk M.L."/>
            <person name="Brice A."/>
            <person name="LeGuern E."/>
            <person name="Bedford H.M."/>
            <person name="Worrall B.B."/>
            <person name="Lovitt S."/>
            <person name="Appel S.H."/>
            <person name="Andermann E."/>
            <person name="Bird T.D."/>
            <person name="Chance P.F."/>
        </authorList>
    </citation>
    <scope>VARIANTS HNA TRP-106 AND PHE-111</scope>
    <scope>VARIANT LEU-145</scope>
</reference>
<comment type="function">
    <text evidence="1 33">Filament-forming cytoskeletal GTPase (By similarity). May play a role in cytokinesis (Potential). May play a role in the internalization of 2 intracellular microbial pathogens, Listeria monocytogenes and Shigella flexneri.</text>
</comment>
<comment type="subunit">
    <text evidence="11 13 15 17 18 21">Septins polymerize into heterooligomeric protein complexes that form filaments, and associate with cellular membranes, actin filaments, and microtubules. GTPase activity is required for filament formation. Interacts with SEPTIN2, SEPTIN6, SEPTIN7, SEPTIN11 and SEPTIN14. Interacts with RTKN and ARHGEF18. In a mesenchymal cell line, Rho/RTKN signals cause disruption of wild-type septin filaments, but not of those containing isoform 2 variants HNA Trp-106 and Phe-111. In a mesenchymal cell line, isoform 2 variants HNA Trp-106 and Phe-111, but not wild type, form filaments with SEPTIN4.</text>
</comment>
<comment type="interaction">
    <interactant intactId="EBI-851542">
        <id>Q9UHD8</id>
    </interactant>
    <interactant intactId="EBI-957999">
        <id>Q9NVA2</id>
        <label>SEPTIN11</label>
    </interactant>
    <organismsDiffer>false</organismsDiffer>
    <experiments>6</experiments>
</comment>
<comment type="interaction">
    <interactant intactId="EBI-851542">
        <id>Q9UHD8</id>
    </interactant>
    <interactant intactId="EBI-741220">
        <id>Q15019</id>
        <label>SEPTIN2</label>
    </interactant>
    <organismsDiffer>false</organismsDiffer>
    <experiments>6</experiments>
</comment>
<comment type="interaction">
    <interactant intactId="EBI-851542">
        <id>Q9UHD8</id>
    </interactant>
    <interactant intactId="EBI-745901">
        <id>Q14141</id>
        <label>SEPTIN6</label>
    </interactant>
    <organismsDiffer>false</organismsDiffer>
    <experiments>8</experiments>
</comment>
<comment type="interaction">
    <interactant intactId="EBI-851542">
        <id>Q9UHD8</id>
    </interactant>
    <interactant intactId="EBI-2009373">
        <id>Q16181</id>
        <label>SEPTIN7</label>
    </interactant>
    <organismsDiffer>false</organismsDiffer>
    <experiments>6</experiments>
</comment>
<comment type="interaction">
    <interactant intactId="EBI-851558">
        <id>Q9UHD8-1</id>
    </interactant>
    <interactant intactId="EBI-447269">
        <id>Q16665</id>
        <label>HIF1A</label>
    </interactant>
    <organismsDiffer>false</organismsDiffer>
    <experiments>4</experiments>
</comment>
<comment type="interaction">
    <interactant intactId="EBI-851558">
        <id>Q9UHD8-1</id>
    </interactant>
    <interactant intactId="EBI-2009297">
        <id>Q6ZU15</id>
        <label>SEPTIN14</label>
    </interactant>
    <organismsDiffer>false</organismsDiffer>
    <experiments>3</experiments>
</comment>
<comment type="interaction">
    <interactant intactId="EBI-851564">
        <id>Q9UHD8-2</id>
    </interactant>
    <interactant intactId="EBI-7116203">
        <id>O75031</id>
        <label>HSF2BP</label>
    </interactant>
    <organismsDiffer>false</organismsDiffer>
    <experiments>3</experiments>
</comment>
<comment type="interaction">
    <interactant intactId="EBI-851569">
        <id>Q9UHD8-3</id>
    </interactant>
    <interactant intactId="EBI-2009297">
        <id>Q6ZU15</id>
        <label>SEPTIN14</label>
    </interactant>
    <organismsDiffer>false</organismsDiffer>
    <experiments>3</experiments>
</comment>
<comment type="subcellular location">
    <subcellularLocation>
        <location evidence="17 18">Cytoplasm</location>
        <location evidence="17 18">Cytoskeleton</location>
    </subcellularLocation>
    <text>In an epithelial cell line, concentrates at cell-cell contact areas. After TGF-beta1 treatment and induction of epithelial to mesenchymal transition, colocalizes partly with actin stress fibers. During bacterial infection, displays a collar shape structure next to actin at the pole of invading bacteria.</text>
</comment>
<comment type="alternative products">
    <event type="alternative splicing"/>
    <isoform>
        <id>Q9UHD8-1</id>
        <name>1</name>
        <name>Epsilon</name>
        <name>MSF-A</name>
        <sequence type="displayed"/>
    </isoform>
    <isoform>
        <id>Q9UHD8-2</id>
        <name>2</name>
        <name>Alpha</name>
        <sequence type="described" ref="VSP_012337"/>
    </isoform>
    <isoform>
        <id>Q9UHD8-3</id>
        <name>3</name>
        <name>Beta</name>
        <name>MSF-B</name>
        <sequence type="described" ref="VSP_012336"/>
    </isoform>
    <isoform>
        <id>Q9UHD8-4</id>
        <name>4</name>
        <name>Delta</name>
        <sequence type="described" ref="VSP_012335"/>
    </isoform>
    <isoform>
        <id>Q9UHD8-5</id>
        <name>5</name>
        <name>Gamma</name>
        <sequence type="described" ref="VSP_012338"/>
    </isoform>
    <isoform>
        <id>Q9UHD8-7</id>
        <name>7</name>
        <sequence type="described" ref="VSP_038317"/>
    </isoform>
    <isoform>
        <id>Q9UHD8-8</id>
        <name>8</name>
        <sequence type="described" ref="VSP_038316 VSP_038318"/>
    </isoform>
    <isoform>
        <id>Q9UHD8-9</id>
        <name>9</name>
        <sequence type="described" ref="VSP_038315 VSP_038319"/>
    </isoform>
    <text>There are potentially 18 isoforms.</text>
</comment>
<comment type="tissue specificity">
    <text evidence="6 7 9 14">Widely expressed. Isoforms are differentially expressed in testes, kidney, liver heart, spleen, brain, peripheral blood leukocytes, skeletal muscle and kidney. Specific isoforms appear to demonstrate tissue specificity. Isoform 5 is the most highly expressed in fetal tissue. Isoform 1 is detected in all tissues except the brain and thymus, while isoform 2, isoform 3, and isoform 4 are detected at low levels in approximately half of the fetal tissues.</text>
</comment>
<comment type="disease">
    <text evidence="6">A chromosomal aberration involving SEPTIN9/MSF is found in therapy-related acute myeloid leukemia (t-AML). Translocation t(11;17)(q23;q25) with KMT2A/MLL1.</text>
</comment>
<comment type="disease" evidence="16 17 20 22">
    <disease id="DI-01728">
        <name>Hereditary neuralgic amyotrophy</name>
        <acronym>HNA</acronym>
        <description>Autosomal dominant form of recurrent focal neuropathy characterized clinically by acute, recurrent episodes of brachial plexus neuropathy with muscle weakness and atrophy preceded by severe pain in the affected arm. HNA is triggered by environmental factors such as infection or parturition.</description>
        <dbReference type="MIM" id="162100"/>
    </disease>
    <text>The disease is caused by variants affecting the gene represented in this entry.</text>
</comment>
<comment type="similarity">
    <text evidence="3">Belongs to the TRAFAC class TrmE-Era-EngA-EngB-Septin-like GTPase superfamily. Septin GTPase family.</text>
</comment>
<comment type="sequence caution" evidence="33">
    <conflict type="miscellaneous discrepancy">
        <sequence resource="EMBL-CDS" id="BAB14057"/>
    </conflict>
    <text>Aberrant splicing.</text>
</comment>
<comment type="online information" name="Atlas of Genetics and Cytogenetics in Oncology and Haematology">
    <link uri="https://atlasgeneticsoncology.org/gene/208/MSF"/>
</comment>